<gene>
    <name type="primary">pazS</name>
</gene>
<reference key="1">
    <citation type="journal article" date="1997" name="Biochem. J.">
        <title>The pseudoazurin gene from Thiosphaera pantotropha: analysis of upstream putative regulatory sequences and overexpression in Escherichia coli.</title>
        <authorList>
            <person name="Leung Y.-C."/>
            <person name="Chan C."/>
            <person name="Reader J.S."/>
            <person name="Willis A.C."/>
            <person name="van Spanning R.J.M."/>
            <person name="Ferguson S.J."/>
            <person name="Radford S.E."/>
        </authorList>
    </citation>
    <scope>NUCLEOTIDE SEQUENCE [GENOMIC DNA]</scope>
    <scope>PROTEIN SEQUENCE OF 23-32</scope>
    <source>
        <strain>ATCC 35512 / DSM 2944 / CIP 106514 / LMD 82.5 / NBRC 102493 / NCCB 82005 / GB17</strain>
    </source>
</reference>
<reference key="2">
    <citation type="journal article" date="1995" name="Biochem. J.">
        <title>The complete amino acid sequence confirms the presence of pseudoazurin in Thiosphaera pantotropha.</title>
        <authorList>
            <person name="Chan C."/>
            <person name="Willis A.C."/>
            <person name="Robinson C.V."/>
            <person name="Aplin R.T."/>
            <person name="Radford S.E."/>
            <person name="Ferguson S.J."/>
        </authorList>
    </citation>
    <scope>PROTEIN SEQUENCE OF 23-145</scope>
    <source>
        <strain>ATCC 35512 / DSM 2944 / CIP 106514 / LMD 82.5 / NBRC 102493 / NCCB 82005 / GB17</strain>
    </source>
</reference>
<reference key="3">
    <citation type="submission" date="1997-02" db="PDB data bank">
        <authorList>
            <person name="Williams P.A."/>
        </authorList>
    </citation>
    <scope>X-RAY CRYSTALLOGRAPHY (2.5 ANGSTROMS)</scope>
</reference>
<evidence type="ECO:0000250" key="1"/>
<evidence type="ECO:0000256" key="2">
    <source>
        <dbReference type="SAM" id="MobiDB-lite"/>
    </source>
</evidence>
<evidence type="ECO:0000269" key="3">
    <source>
    </source>
</evidence>
<evidence type="ECO:0000269" key="4">
    <source>
    </source>
</evidence>
<evidence type="ECO:0007829" key="5">
    <source>
        <dbReference type="PDB" id="3ERX"/>
    </source>
</evidence>
<comment type="function">
    <text>This soluble electron transfer copper protein is required for the inactivation of copper-containing nitrite reductase in the presence of oxygen.</text>
</comment>
<comment type="cofactor">
    <cofactor>
        <name>Cu cation</name>
        <dbReference type="ChEBI" id="CHEBI:23378"/>
    </cofactor>
    <text>Binds 1 copper ion per subunit.</text>
</comment>
<comment type="subunit">
    <text>Homodimer.</text>
</comment>
<comment type="subcellular location">
    <subcellularLocation>
        <location>Periplasm</location>
    </subcellularLocation>
</comment>
<organism>
    <name type="scientific">Paracoccus pantotrophus</name>
    <name type="common">Thiosphaera pantotropha</name>
    <dbReference type="NCBI Taxonomy" id="82367"/>
    <lineage>
        <taxon>Bacteria</taxon>
        <taxon>Pseudomonadati</taxon>
        <taxon>Pseudomonadota</taxon>
        <taxon>Alphaproteobacteria</taxon>
        <taxon>Rhodobacterales</taxon>
        <taxon>Paracoccaceae</taxon>
        <taxon>Paracoccus</taxon>
    </lineage>
</organism>
<proteinExistence type="evidence at protein level"/>
<name>AZUP_PARPN</name>
<accession>P80401</accession>
<protein>
    <recommendedName>
        <fullName>Pseudoazurin</fullName>
    </recommendedName>
</protein>
<dbReference type="EMBL" id="Z73141">
    <property type="protein sequence ID" value="CAA97485.1"/>
    <property type="molecule type" value="mRNA"/>
</dbReference>
<dbReference type="EMBL" id="Z70033">
    <property type="protein sequence ID" value="CAA93848.1"/>
    <property type="molecule type" value="Genomic_DNA"/>
</dbReference>
<dbReference type="PIR" id="S55326">
    <property type="entry name" value="S55326"/>
</dbReference>
<dbReference type="RefSeq" id="WP_024842647.1">
    <property type="nucleotide sequence ID" value="NZ_CP038206.1"/>
</dbReference>
<dbReference type="PDB" id="1ADW">
    <property type="method" value="X-ray"/>
    <property type="resolution" value="2.50 A"/>
    <property type="chains" value="A/B=23-145"/>
</dbReference>
<dbReference type="PDB" id="3ERX">
    <property type="method" value="X-ray"/>
    <property type="resolution" value="1.25 A"/>
    <property type="chains" value="A/B=23-145"/>
</dbReference>
<dbReference type="PDB" id="4BWT">
    <property type="method" value="X-ray"/>
    <property type="resolution" value="1.76 A"/>
    <property type="chains" value="A/B=23-145"/>
</dbReference>
<dbReference type="PDB" id="4BWU">
    <property type="method" value="X-ray"/>
    <property type="resolution" value="1.76 A"/>
    <property type="chains" value="A/B=23-145"/>
</dbReference>
<dbReference type="PDB" id="4BXV">
    <property type="method" value="X-ray"/>
    <property type="resolution" value="1.76 A"/>
    <property type="chains" value="A/B=23-145"/>
</dbReference>
<dbReference type="PDBsum" id="1ADW"/>
<dbReference type="PDBsum" id="3ERX"/>
<dbReference type="PDBsum" id="4BWT"/>
<dbReference type="PDBsum" id="4BWU"/>
<dbReference type="PDBsum" id="4BXV"/>
<dbReference type="BMRB" id="P80401"/>
<dbReference type="SMR" id="P80401"/>
<dbReference type="STRING" id="82367.SAMN04244567_00639"/>
<dbReference type="GeneID" id="51369526"/>
<dbReference type="eggNOG" id="COG3794">
    <property type="taxonomic scope" value="Bacteria"/>
</dbReference>
<dbReference type="OrthoDB" id="7510199at2"/>
<dbReference type="EvolutionaryTrace" id="P80401"/>
<dbReference type="GO" id="GO:0042597">
    <property type="term" value="C:periplasmic space"/>
    <property type="evidence" value="ECO:0007669"/>
    <property type="project" value="UniProtKB-SubCell"/>
</dbReference>
<dbReference type="GO" id="GO:0005507">
    <property type="term" value="F:copper ion binding"/>
    <property type="evidence" value="ECO:0007669"/>
    <property type="project" value="InterPro"/>
</dbReference>
<dbReference type="GO" id="GO:0009055">
    <property type="term" value="F:electron transfer activity"/>
    <property type="evidence" value="ECO:0007669"/>
    <property type="project" value="InterPro"/>
</dbReference>
<dbReference type="CDD" id="cd04218">
    <property type="entry name" value="Pseudoazurin"/>
    <property type="match status" value="1"/>
</dbReference>
<dbReference type="Gene3D" id="2.60.40.420">
    <property type="entry name" value="Cupredoxins - blue copper proteins"/>
    <property type="match status" value="1"/>
</dbReference>
<dbReference type="InterPro" id="IPR002386">
    <property type="entry name" value="Amicyanin/Pseudoazurin"/>
</dbReference>
<dbReference type="InterPro" id="IPR000923">
    <property type="entry name" value="BlueCu_1"/>
</dbReference>
<dbReference type="InterPro" id="IPR028871">
    <property type="entry name" value="BlueCu_1_BS"/>
</dbReference>
<dbReference type="InterPro" id="IPR001235">
    <property type="entry name" value="Copper_blue_Plastocyanin"/>
</dbReference>
<dbReference type="InterPro" id="IPR008972">
    <property type="entry name" value="Cupredoxin"/>
</dbReference>
<dbReference type="InterPro" id="IPR012745">
    <property type="entry name" value="Pseudoazurin"/>
</dbReference>
<dbReference type="NCBIfam" id="TIGR02375">
    <property type="entry name" value="pseudoazurin"/>
    <property type="match status" value="1"/>
</dbReference>
<dbReference type="Pfam" id="PF00127">
    <property type="entry name" value="Copper-bind"/>
    <property type="match status" value="1"/>
</dbReference>
<dbReference type="PRINTS" id="PR00155">
    <property type="entry name" value="AMICYANIN"/>
</dbReference>
<dbReference type="PRINTS" id="PR00156">
    <property type="entry name" value="COPPERBLUE"/>
</dbReference>
<dbReference type="SUPFAM" id="SSF49503">
    <property type="entry name" value="Cupredoxins"/>
    <property type="match status" value="1"/>
</dbReference>
<dbReference type="PROSITE" id="PS00196">
    <property type="entry name" value="COPPER_BLUE"/>
    <property type="match status" value="1"/>
</dbReference>
<keyword id="KW-0002">3D-structure</keyword>
<keyword id="KW-0186">Copper</keyword>
<keyword id="KW-0903">Direct protein sequencing</keyword>
<keyword id="KW-0249">Electron transport</keyword>
<keyword id="KW-0479">Metal-binding</keyword>
<keyword id="KW-0574">Periplasm</keyword>
<keyword id="KW-0732">Signal</keyword>
<keyword id="KW-0813">Transport</keyword>
<sequence length="145" mass="15446">MFHHSLAAAAAALLALAAPGFAATHEVHMLNKGESGAMVFEPAFVRAEPGDVINFVPTDKSHNVEAIKEILPEGVESFKSKINESYTLTVTEPGLYGVKCTPHFGMGMVGLVQVGDAPENLDAAKTAKMPKKARERMDAELAQVN</sequence>
<feature type="signal peptide" evidence="3 4">
    <location>
        <begin position="1"/>
        <end position="22"/>
    </location>
</feature>
<feature type="chain" id="PRO_0000002850" description="Pseudoazurin">
    <location>
        <begin position="23"/>
        <end position="145"/>
    </location>
</feature>
<feature type="domain" description="Plastocyanin-like">
    <location>
        <begin position="27"/>
        <end position="115"/>
    </location>
</feature>
<feature type="region of interest" description="Disordered" evidence="2">
    <location>
        <begin position="126"/>
        <end position="145"/>
    </location>
</feature>
<feature type="binding site" evidence="1">
    <location>
        <position position="62"/>
    </location>
    <ligand>
        <name>Cu cation</name>
        <dbReference type="ChEBI" id="CHEBI:23378"/>
    </ligand>
</feature>
<feature type="binding site" evidence="1">
    <location>
        <position position="100"/>
    </location>
    <ligand>
        <name>Cu cation</name>
        <dbReference type="ChEBI" id="CHEBI:23378"/>
    </ligand>
</feature>
<feature type="binding site" evidence="1">
    <location>
        <position position="103"/>
    </location>
    <ligand>
        <name>Cu cation</name>
        <dbReference type="ChEBI" id="CHEBI:23378"/>
    </ligand>
</feature>
<feature type="binding site" evidence="1">
    <location>
        <position position="108"/>
    </location>
    <ligand>
        <name>Cu cation</name>
        <dbReference type="ChEBI" id="CHEBI:23378"/>
    </ligand>
</feature>
<feature type="strand" evidence="5">
    <location>
        <begin position="24"/>
        <end position="33"/>
    </location>
</feature>
<feature type="strand" evidence="5">
    <location>
        <begin position="36"/>
        <end position="47"/>
    </location>
</feature>
<feature type="strand" evidence="5">
    <location>
        <begin position="51"/>
        <end position="59"/>
    </location>
</feature>
<feature type="strand" evidence="5">
    <location>
        <begin position="86"/>
        <end position="90"/>
    </location>
</feature>
<feature type="strand" evidence="5">
    <location>
        <begin position="94"/>
        <end position="99"/>
    </location>
</feature>
<feature type="helix" evidence="5">
    <location>
        <begin position="101"/>
        <end position="103"/>
    </location>
</feature>
<feature type="turn" evidence="5">
    <location>
        <begin position="104"/>
        <end position="107"/>
    </location>
</feature>
<feature type="strand" evidence="5">
    <location>
        <begin position="109"/>
        <end position="117"/>
    </location>
</feature>
<feature type="helix" evidence="5">
    <location>
        <begin position="121"/>
        <end position="126"/>
    </location>
</feature>
<feature type="helix" evidence="5">
    <location>
        <begin position="131"/>
        <end position="141"/>
    </location>
</feature>